<protein>
    <recommendedName>
        <fullName>Replicase polyprotein 1ab</fullName>
    </recommendedName>
    <component>
        <recommendedName>
            <fullName>Leader protease</fullName>
            <shortName>L-Pro</shortName>
            <ecNumber>3.4.22.-</ecNumber>
        </recommendedName>
        <alternativeName>
            <fullName>Papain-like cysteine proteinase</fullName>
            <shortName>PCP</shortName>
        </alternativeName>
    </component>
    <component>
        <recommendedName>
            <fullName>Methyltransferase/helicase/RNA-directed RNA polymerase</fullName>
            <ecNumber>2.1.1.-</ecNumber>
            <ecNumber>2.7.7.48</ecNumber>
            <ecNumber>3.6.4.13</ecNumber>
        </recommendedName>
    </component>
</protein>
<proteinExistence type="evidence at protein level"/>
<gene>
    <name type="ORF">1a-1b</name>
</gene>
<organism>
    <name type="scientific">Beet yellows virus (isolate Ukraine)</name>
    <name type="common">BYV</name>
    <name type="synonym">Sugar beet yellows virus</name>
    <dbReference type="NCBI Taxonomy" id="478555"/>
    <lineage>
        <taxon>Viruses</taxon>
        <taxon>Riboviria</taxon>
        <taxon>Orthornavirae</taxon>
        <taxon>Kitrinoviricota</taxon>
        <taxon>Alsuviricetes</taxon>
        <taxon>Martellivirales</taxon>
        <taxon>Closteroviridae</taxon>
        <taxon>Closterovirus</taxon>
        <taxon>Beet yellows virus</taxon>
    </lineage>
</organism>
<organismHost>
    <name type="scientific">Beta vulgaris</name>
    <name type="common">Sugar beet</name>
    <dbReference type="NCBI Taxonomy" id="161934"/>
</organismHost>
<sequence length="3094" mass="348277">MAFLNVSAVPSCAFAPAFAPHAGASPIVPDSFPCVPRYSDDISHFRLTLSLDFSVPRPLSLNARVHLSASTDNPLPSLPLGFHAETFVLELNGSSAPFSIPSRHIDFVVNRPFSVFPTEVLSVSSLRTPSRLFALLCDFFLYCSKPGPCVEIASFSTPPPCLVSNCVAQIPTHAEMESIRFPTKTLPAGRFLQFHKRKYTKRPETLIIHESGLALKTSALGVTSKPNSRPITVKSASGEKYEAYEISRKDFERSRRRQQTPRVRSHKPRKINKAVEPFFFPEEPKKDKRKRASLPTEDEGFITFGTLRFPLSETPKEEPRLPKFREVEIPVVKKHAVPAVVSKPVRTFRPVATTGAEYVNARNQCSRRPRNHPILRSASYTFGFKKMPLQRFMKEKKEYYVKRSKVVSSCSVTKSPLEALASILKNLPQYSYNSERLKFYDHFIGDDFEIEVHPLRGGKLSVLLILPKGEAYCVVTAATPQYHAALTIARGDRPRVGELLQYRPGEGLCYLAHAALCCALQKRTFREEDFFVGMYPTKFVFAKRLTEKLGPSALKHPVRGRQVSRSLFHCDVASAFSSPFYSLPRFIGGVEEEAPEITSSLKHKAIESVYERVSIHKDNLLARSVEKDLIDFKDEIKSLSKEKRSVTVPFYMGEAVQSGLTRAYPQFNLSFTHSVYSDHPAAAGSRLLENETLASMAKSSFSDIGGCPLFHIKRGSTDYHVCRPIYDMKDAQRRVSRELQARGLVENLSREQLVEAQARVSVCPHTLGNCNVKSDVLIMVQVYDASLNEIASAMVLKESKVAYLTMVTPGELLDEREAFAIDALGCDVVVDTRRDMVQYKFGSSCYCHKLSNIKSIMLTPAFTFSGNLFSVEMYENRMGVNYYKITRSAYSPEIRGVKTLRYRRACTEVVQVKLPRFDKTLKTFLSGYDYIYLDAKFVSRVFDYVVSNCSVVNSKTFEWVWSYIKSSKSRVVISGKVIHRDVHIDLKHSECFAAVMLAVGVRSRTTTEFLAKNLNYYTGDASCFETIRFLFREWSRRAYAEINRSFRKLMKSILSAGLDYEFLDLDNSLQHLLEYSEVEVRVSIAQNGEVDCNEENRVLTEIIAEAADRKSIAQGLSGALSSVPTQPRGGLRGGSRRSGVSFLYNLVEEVGNLFFSVGDAVRFLVKVFKTFSDSPIFRVVRMFLDLAEAASPFVSVVSLCAWLREAVSAFSSWVADRTVSESVKTFVNRTVKRFLNFMSAKTLTKKFFRFFLSASALAKTVVRKAKVILEAYWEVWFESILSDSGEYSAVEFCSSVVITLLTNSGRLLPGFSPSAIITEVLLDLATKISIEVLLKQISPADSTASSALYRRVLSEILSNFRTMGEHGIFTKVFLLCGFLPVFVRKCVALCVPGDMATYARFLEYGVDDLFFLGRSVNSIKNYLCVVAAGLVDSIVDSVVLKLSGVAKERVLGFKSKIIKNFLNVFRKAKVVTRTSSSTDLSEDEYFSCDESKPGLRGGSSRFTLSRLLDIFFNFLKSSKLVIENACFSAYERIERNMKLYFFPLNSSEEEARRLIRCAGDFDYLSDSAFDEDEMLRQAFEQYYSSDDESVTYDGKPTVLRSYLNVSRRFLETFCNGPKFFVKVSNYFKALYSRLLRVLPWVDRNLSDSPGLKGGNEKALLAKFFKTCVITACECVSQICCLRLIRLCWGTPACGLVRLFYITYSSTRVLSRVVVAVAVCPLLVRNELDGLSDGLTNMGVSVFRRLFVALRRALSAYSNSALRRKIIEFIFGNIHHPFDVAVIETNEVAPEPLSPEVDIDVDCDFGSDSESVSSDEVASNPRPGLHGGSRRSSNFLTSLVKVVFKLARRIPRLLFRLRNFVAYFVERRLASKRLKTFIGLARLFDNFSLTSVVYLLQEYDSVLNAFIDVELILLNSGSVNVLPLVSWVRGSLTKLAEAIVGSGFASFLGRMCCRVSDWCSSSSNAGCNFMSPVRTKGKFVPPSSSGSTASMYERLEALESDIREHVLSTCRVGSDEEEERPKEVTEPGIEHTSEDVVPIRSHSQPLSGGECSYSEDREENERANLLPHVSKIVSERRGLETARRNKRTLHGVSEFLNAINTSNEQPRPIIVDHSPESRALTNSVREFYYLQELALFELSCKLREYYDQLKVANFNRQECLCDKDEDMFVLRAGQGVVSGRNSRLPLKHFKGHEFCFRSGGLVPYDGTSRVDTIFHTQTNFVSANALLSGYLSYRTFTFTNLSANVLLYEAPPGGGKTTTLIKVFCETFSKVNSLILTANKSSREEILAKVNRIVLDEGDTPLQTRDRILTIDSYLMNNRGLTCKVLYLDECFMVHAGAAVACIEFTKCDSAILFGDSRQIRYGRCSELDTAVLSDLNRFVDDESRVYGEVSYRCPWDVCAWLSTFYPKTVATTNLVSAGQSSMQVREIESVDDVEYSSEFVYLTMLQSEKKDLLKSFGKRSRSSVEKPTVLTVHEAQGETYRKVNLVRTKFQEDDPFRSENHITVALSRHVESLTYSVLSSKRDDAIAQAIVKAKQLVDAYRVYPTSFGGSTLDVSVNPSTSDRSKCKASSAPYEVINSFLESVVPGTTSVDFGDVSEEMGTQVFESGADNVVIRDSAPVNKSTDHDPQRVSSIRSQAIPKRKPSLQENLYSYESRNYNFTVCERFSGPQEFGQAMAMVMLERSFDLEKVAKVRSDVIAITEKGVRTWMSKREPSQLRALSSDLQKPLNLEEEITTFKLMVKRDAKVKLDSSCLVKHPPAQNIMFHRKAVNAIFSPCFDEFKNRVITCTNSNIVFFTEMTNSTLASIAKEMLGSEHVYNVGEIDFSKFDKSQDAFIKSFERTLYSAFGFDEDLLDVWMQGEYTSNATTLDGQLSFSVDNQRKSGASNTWIGNSIETLGILSMFYYTNRFKALFVSGDDSLIFSESPIRNSADAMCTELGFETKFLTPSVPYFCSKFFVMTGHDVFFVPDPYKLLVKLGASKDEVDDEFLFEVFTSFRDLTKDLVDERVIELLTHLVHSKYGYESGDTYAALCAIHCIRSNFSSFKKLYPKVKGWVVHYGKLKFVLRKFANCFREKFDTAFGERTFLLTTKLETVL</sequence>
<accession>Q08534</accession>
<accession>Q66109</accession>
<comment type="function">
    <text evidence="5">L-pro is involved in systemic transport and in RNA amplification.</text>
</comment>
<comment type="function">
    <text evidence="7">RNA-dependent RNA polymerase replicates the viral genome.</text>
</comment>
<comment type="catalytic activity">
    <reaction evidence="2">
        <text>RNA(n) + a ribonucleoside 5'-triphosphate = RNA(n+1) + diphosphate</text>
        <dbReference type="Rhea" id="RHEA:21248"/>
        <dbReference type="Rhea" id="RHEA-COMP:14527"/>
        <dbReference type="Rhea" id="RHEA-COMP:17342"/>
        <dbReference type="ChEBI" id="CHEBI:33019"/>
        <dbReference type="ChEBI" id="CHEBI:61557"/>
        <dbReference type="ChEBI" id="CHEBI:140395"/>
        <dbReference type="EC" id="2.7.7.48"/>
    </reaction>
</comment>
<comment type="catalytic activity">
    <reaction>
        <text>ATP + H2O = ADP + phosphate + H(+)</text>
        <dbReference type="Rhea" id="RHEA:13065"/>
        <dbReference type="ChEBI" id="CHEBI:15377"/>
        <dbReference type="ChEBI" id="CHEBI:15378"/>
        <dbReference type="ChEBI" id="CHEBI:30616"/>
        <dbReference type="ChEBI" id="CHEBI:43474"/>
        <dbReference type="ChEBI" id="CHEBI:456216"/>
        <dbReference type="EC" id="3.6.4.13"/>
    </reaction>
</comment>
<comment type="subcellular location">
    <molecule>Leader protease</molecule>
    <subcellularLocation>
        <location>Host cytoplasmic vesicle membrane</location>
    </subcellularLocation>
    <text>Associates with the closterovirus-induced membranous vesicle aggregates.</text>
</comment>
<comment type="subcellular location">
    <molecule>Methyltransferase/helicase/RNA-directed RNA polymerase</molecule>
    <subcellularLocation>
        <location>Host cytoplasmic vesicle membrane</location>
    </subcellularLocation>
    <text>Associates with the closterovirus-induced membranous vesicle aggregates.</text>
</comment>
<comment type="alternative products">
    <event type="ribosomal frameshifting"/>
    <isoform>
        <id>Q08534-1</id>
        <name>Replicase 1ab</name>
        <sequence type="displayed"/>
    </isoform>
    <isoform>
        <id>Q08534-2</id>
        <name>Replicase 1a</name>
        <sequence type="described" ref="VSP_029860"/>
    </isoform>
    <text evidence="6">The replicase 1a is produced from conventional translation of the 1a ORF. The replicase 1ab is generated probably by a +1 ribosomal frameshifting mechanism occurring at the 1a-1b genes boundary.</text>
</comment>
<comment type="domain">
    <text>The C-terminal domain is required for autoproteolysis.</text>
</comment>
<comment type="PTM">
    <text>The leader protease is released by autoproteolysis.</text>
</comment>
<dbReference type="EC" id="3.4.22.-"/>
<dbReference type="EC" id="2.1.1.-"/>
<dbReference type="EC" id="2.7.7.48"/>
<dbReference type="EC" id="3.6.4.13"/>
<dbReference type="EMBL" id="X73476">
    <property type="protein sequence ID" value="CAA51871.1"/>
    <property type="molecule type" value="Genomic_RNA"/>
</dbReference>
<dbReference type="EMBL" id="X53462">
    <property type="protein sequence ID" value="CAA37549.1"/>
    <property type="molecule type" value="Genomic_RNA"/>
</dbReference>
<dbReference type="MEROPS" id="C42.001"/>
<dbReference type="KEGG" id="vg:1493976"/>
<dbReference type="Proteomes" id="UP000000359">
    <property type="component" value="Segment"/>
</dbReference>
<dbReference type="GO" id="GO:0044162">
    <property type="term" value="C:host cell cytoplasmic vesicle membrane"/>
    <property type="evidence" value="ECO:0007669"/>
    <property type="project" value="UniProtKB-SubCell"/>
</dbReference>
<dbReference type="GO" id="GO:0016020">
    <property type="term" value="C:membrane"/>
    <property type="evidence" value="ECO:0007669"/>
    <property type="project" value="UniProtKB-KW"/>
</dbReference>
<dbReference type="GO" id="GO:0005524">
    <property type="term" value="F:ATP binding"/>
    <property type="evidence" value="ECO:0007669"/>
    <property type="project" value="UniProtKB-KW"/>
</dbReference>
<dbReference type="GO" id="GO:0016887">
    <property type="term" value="F:ATP hydrolysis activity"/>
    <property type="evidence" value="ECO:0007669"/>
    <property type="project" value="RHEA"/>
</dbReference>
<dbReference type="GO" id="GO:0008234">
    <property type="term" value="F:cysteine-type peptidase activity"/>
    <property type="evidence" value="ECO:0007669"/>
    <property type="project" value="UniProtKB-KW"/>
</dbReference>
<dbReference type="GO" id="GO:0008174">
    <property type="term" value="F:mRNA methyltransferase activity"/>
    <property type="evidence" value="ECO:0007669"/>
    <property type="project" value="InterPro"/>
</dbReference>
<dbReference type="GO" id="GO:0003723">
    <property type="term" value="F:RNA binding"/>
    <property type="evidence" value="ECO:0007669"/>
    <property type="project" value="InterPro"/>
</dbReference>
<dbReference type="GO" id="GO:0003724">
    <property type="term" value="F:RNA helicase activity"/>
    <property type="evidence" value="ECO:0007669"/>
    <property type="project" value="UniProtKB-EC"/>
</dbReference>
<dbReference type="GO" id="GO:0003968">
    <property type="term" value="F:RNA-directed RNA polymerase activity"/>
    <property type="evidence" value="ECO:0007669"/>
    <property type="project" value="UniProtKB-KW"/>
</dbReference>
<dbReference type="GO" id="GO:0006351">
    <property type="term" value="P:DNA-templated transcription"/>
    <property type="evidence" value="ECO:0007669"/>
    <property type="project" value="InterPro"/>
</dbReference>
<dbReference type="GO" id="GO:0032259">
    <property type="term" value="P:methylation"/>
    <property type="evidence" value="ECO:0007669"/>
    <property type="project" value="UniProtKB-KW"/>
</dbReference>
<dbReference type="GO" id="GO:0016556">
    <property type="term" value="P:mRNA modification"/>
    <property type="evidence" value="ECO:0007669"/>
    <property type="project" value="InterPro"/>
</dbReference>
<dbReference type="GO" id="GO:0006508">
    <property type="term" value="P:proteolysis"/>
    <property type="evidence" value="ECO:0007669"/>
    <property type="project" value="UniProtKB-KW"/>
</dbReference>
<dbReference type="GO" id="GO:0006396">
    <property type="term" value="P:RNA processing"/>
    <property type="evidence" value="ECO:0007669"/>
    <property type="project" value="InterPro"/>
</dbReference>
<dbReference type="GO" id="GO:0039694">
    <property type="term" value="P:viral RNA genome replication"/>
    <property type="evidence" value="ECO:0007669"/>
    <property type="project" value="InterPro"/>
</dbReference>
<dbReference type="GO" id="GO:0075523">
    <property type="term" value="P:viral translational frameshifting"/>
    <property type="evidence" value="ECO:0007669"/>
    <property type="project" value="UniProtKB-KW"/>
</dbReference>
<dbReference type="CDD" id="cd23253">
    <property type="entry name" value="Closteroviridae_RdRp"/>
    <property type="match status" value="1"/>
</dbReference>
<dbReference type="Gene3D" id="3.40.50.300">
    <property type="entry name" value="P-loop containing nucleotide triphosphate hydrolases"/>
    <property type="match status" value="2"/>
</dbReference>
<dbReference type="InterPro" id="IPR027351">
    <property type="entry name" value="(+)RNA_virus_helicase_core_dom"/>
</dbReference>
<dbReference type="InterPro" id="IPR002588">
    <property type="entry name" value="Alphavirus-like_MT_dom"/>
</dbReference>
<dbReference type="InterPro" id="IPR047308">
    <property type="entry name" value="Closteroviridae_RdRp"/>
</dbReference>
<dbReference type="InterPro" id="IPR043502">
    <property type="entry name" value="DNA/RNA_pol_sf"/>
</dbReference>
<dbReference type="InterPro" id="IPR027417">
    <property type="entry name" value="P-loop_NTPase"/>
</dbReference>
<dbReference type="InterPro" id="IPR008749">
    <property type="entry name" value="Peptidase_C42"/>
</dbReference>
<dbReference type="InterPro" id="IPR001788">
    <property type="entry name" value="RNA-dep_RNA_pol_alsuvir"/>
</dbReference>
<dbReference type="InterPro" id="IPR007094">
    <property type="entry name" value="RNA-dir_pol_PSvirus"/>
</dbReference>
<dbReference type="InterPro" id="IPR040910">
    <property type="entry name" value="Zemlya"/>
</dbReference>
<dbReference type="Pfam" id="PF05533">
    <property type="entry name" value="Peptidase_C42"/>
    <property type="match status" value="1"/>
</dbReference>
<dbReference type="Pfam" id="PF00978">
    <property type="entry name" value="RdRP_2"/>
    <property type="match status" value="1"/>
</dbReference>
<dbReference type="Pfam" id="PF01443">
    <property type="entry name" value="Viral_helicase1"/>
    <property type="match status" value="1"/>
</dbReference>
<dbReference type="Pfam" id="PF01660">
    <property type="entry name" value="Vmethyltransf"/>
    <property type="match status" value="1"/>
</dbReference>
<dbReference type="Pfam" id="PF17646">
    <property type="entry name" value="Zemlya"/>
    <property type="match status" value="1"/>
</dbReference>
<dbReference type="SUPFAM" id="SSF56672">
    <property type="entry name" value="DNA/RNA polymerases"/>
    <property type="match status" value="1"/>
</dbReference>
<dbReference type="SUPFAM" id="SSF52540">
    <property type="entry name" value="P-loop containing nucleoside triphosphate hydrolases"/>
    <property type="match status" value="1"/>
</dbReference>
<dbReference type="PROSITE" id="PS51743">
    <property type="entry name" value="ALPHAVIRUS_MT"/>
    <property type="match status" value="1"/>
</dbReference>
<dbReference type="PROSITE" id="PS51657">
    <property type="entry name" value="PSRV_HELICASE"/>
    <property type="match status" value="1"/>
</dbReference>
<dbReference type="PROSITE" id="PS50507">
    <property type="entry name" value="RDRP_SSRNA_POS"/>
    <property type="match status" value="1"/>
</dbReference>
<evidence type="ECO:0000255" key="1"/>
<evidence type="ECO:0000255" key="2">
    <source>
        <dbReference type="PROSITE-ProRule" id="PRU00539"/>
    </source>
</evidence>
<evidence type="ECO:0000255" key="3">
    <source>
        <dbReference type="PROSITE-ProRule" id="PRU01079"/>
    </source>
</evidence>
<evidence type="ECO:0000256" key="4">
    <source>
        <dbReference type="SAM" id="MobiDB-lite"/>
    </source>
</evidence>
<evidence type="ECO:0000269" key="5">
    <source>
    </source>
</evidence>
<evidence type="ECO:0000269" key="6">
    <source>
    </source>
</evidence>
<evidence type="ECO:0000305" key="7"/>
<feature type="chain" id="PRO_0000312562" description="Replicase polyprotein 1ab">
    <location>
        <begin position="1"/>
        <end position="3094"/>
    </location>
</feature>
<feature type="chain" id="PRO_0000312563" description="Leader protease">
    <location>
        <begin position="1"/>
        <end position="588"/>
    </location>
</feature>
<feature type="chain" id="PRO_0000312564" description="Methyltransferase/helicase/RNA-directed RNA polymerase">
    <location>
        <begin position="589"/>
        <end position="3094"/>
    </location>
</feature>
<feature type="domain" description="Alphavirus-like MT" evidence="3">
    <location>
        <begin position="670"/>
        <end position="857"/>
    </location>
</feature>
<feature type="domain" description="(+)RNA virus helicase ATP-binding">
    <location>
        <begin position="2215"/>
        <end position="2387"/>
    </location>
</feature>
<feature type="domain" description="(+)RNA virus helicase C-terminal">
    <location>
        <begin position="2388"/>
        <end position="2548"/>
    </location>
</feature>
<feature type="domain" description="RdRp catalytic" evidence="2">
    <location>
        <begin position="2817"/>
        <end position="2930"/>
    </location>
</feature>
<feature type="region of interest" description="Disordered" evidence="4">
    <location>
        <begin position="1807"/>
        <end position="1828"/>
    </location>
</feature>
<feature type="coiled-coil region" evidence="1">
    <location>
        <begin position="622"/>
        <end position="647"/>
    </location>
</feature>
<feature type="compositionally biased region" description="Low complexity" evidence="4">
    <location>
        <begin position="1807"/>
        <end position="1816"/>
    </location>
</feature>
<feature type="active site" description="For leader protease activity" evidence="6">
    <location>
        <position position="509"/>
    </location>
</feature>
<feature type="active site" description="For leader protease activity" evidence="6">
    <location>
        <position position="569"/>
    </location>
</feature>
<feature type="site" description="Cleavage; by the leader protease">
    <location>
        <begin position="588"/>
        <end position="589"/>
    </location>
</feature>
<feature type="splice variant" id="VSP_029860" description="In isoform Replicase 1a." evidence="7">
    <location>
        <begin position="2631"/>
        <end position="3094"/>
    </location>
</feature>
<name>R1AB_BYVU</name>
<keyword id="KW-0067">ATP-binding</keyword>
<keyword id="KW-0175">Coiled coil</keyword>
<keyword id="KW-0903">Direct protein sequencing</keyword>
<keyword id="KW-0347">Helicase</keyword>
<keyword id="KW-1036">Host cytoplasmic vesicle</keyword>
<keyword id="KW-1043">Host membrane</keyword>
<keyword id="KW-0378">Hydrolase</keyword>
<keyword id="KW-0472">Membrane</keyword>
<keyword id="KW-0489">Methyltransferase</keyword>
<keyword id="KW-0547">Nucleotide-binding</keyword>
<keyword id="KW-0548">Nucleotidyltransferase</keyword>
<keyword id="KW-0645">Protease</keyword>
<keyword id="KW-1185">Reference proteome</keyword>
<keyword id="KW-0688">Ribosomal frameshifting</keyword>
<keyword id="KW-0696">RNA-directed RNA polymerase</keyword>
<keyword id="KW-0788">Thiol protease</keyword>
<keyword id="KW-0808">Transferase</keyword>
<keyword id="KW-0693">Viral RNA replication</keyword>
<reference key="1">
    <citation type="journal article" date="1994" name="Virology">
        <title>Beet yellows closterovirus: complete genome structure and identification of a leader papain-like thiol protease.</title>
        <authorList>
            <person name="Agranovsky A.A."/>
            <person name="Koonin E.V."/>
            <person name="Boyko V.P."/>
            <person name="Maiss E."/>
            <person name="Froetschl R."/>
            <person name="Lunina N.A."/>
            <person name="Atabekov J.G."/>
        </authorList>
    </citation>
    <scope>NUCLEOTIDE SEQUENCE [GENOMIC RNA]</scope>
    <scope>RIBOSOMAL FRAMESHIFT</scope>
    <scope>PROCESSING OF POLYPROTEIN</scope>
    <scope>ACTIVE SITES OF LEADER PROTEASE</scope>
</reference>
<reference key="2">
    <citation type="journal article" date="1991" name="J. Gen. Virol.">
        <title>Nucleotide sequence of the 3'-terminal half of beet yellows closterovirus RNA genome: unique arrangement of eight virus genes.</title>
        <authorList>
            <person name="Agranovsky A.A."/>
            <person name="Boyko V.P."/>
            <person name="Karasev A.V."/>
            <person name="Lunina N.A."/>
            <person name="Koonin E.V."/>
            <person name="Dolja V.V."/>
        </authorList>
    </citation>
    <scope>NUCLEOTIDE SEQUENCE [GENOMIC RNA] OF 2857-3074</scope>
</reference>
<reference key="3">
    <citation type="journal article" date="2003" name="J. Gen. Virol.">
        <title>Processing and subcellular localization of the leader papain-like proteinase of Beet yellows closterovirus.</title>
        <authorList>
            <person name="Zinovkin R.A."/>
            <person name="Erokhina T.N."/>
            <person name="Lesemann D.E."/>
            <person name="Jelkmann W."/>
            <person name="Agranovsky A.A."/>
        </authorList>
    </citation>
    <scope>PROTEIN SEQUENCE OF 589-594</scope>
    <scope>PROCESSING OF POLYPROTEIN</scope>
    <scope>SUBCELLULAR LOCATION OF THE LEADER PROTEASE</scope>
</reference>
<reference key="4">
    <citation type="journal article" date="2001" name="J. Gen. Virol.">
        <title>Ultrastructural localization and epitope mapping of the methyltransferase-like and helicase-like proteins of Beet yellows virus.</title>
        <authorList>
            <person name="Erokhina T.N."/>
            <person name="Vitushkina M.V."/>
            <person name="Zinovkin R.A."/>
            <person name="Lesemann D.E."/>
            <person name="Jelkmann W."/>
            <person name="Koonin E.V."/>
            <person name="Agranovsky A.A."/>
        </authorList>
    </citation>
    <scope>SUBCELLULAR LOCATION OF METHYLTRANSFERASE/HELICASE/RNA-DIRECTED RNA POLYMERASE</scope>
</reference>
<reference key="5">
    <citation type="journal article" date="2001" name="J. Virol.">
        <title>Functional specialization and evolution of leader proteinases in the family Closteroviridae.</title>
        <authorList>
            <person name="Peng C.-W."/>
            <person name="Peremyslov V.V."/>
            <person name="Mushegian A.R."/>
            <person name="Dawson W.O."/>
            <person name="Dolja V.V."/>
        </authorList>
    </citation>
    <scope>CHARACTERIZATION OF THE LEADER PROTEASE</scope>
</reference>
<reference key="6">
    <citation type="journal article" date="2003" name="J. Virol.">
        <title>Leader proteinase of beet yellows virus functions in long-distance transport.</title>
        <authorList>
            <person name="Peng C.-W."/>
            <person name="Napuli A.J."/>
            <person name="Dolja V.V."/>
        </authorList>
    </citation>
    <scope>FUNCTION OF THE LEADER PROTEASE</scope>
</reference>